<dbReference type="EMBL" id="AF060570">
    <property type="protein sequence ID" value="AAD11628.1"/>
    <property type="status" value="ALT_FRAME"/>
    <property type="molecule type" value="mRNA"/>
</dbReference>
<dbReference type="EMBL" id="BQ769335">
    <property type="status" value="NOT_ANNOTATED_CDS"/>
    <property type="molecule type" value="mRNA"/>
</dbReference>
<dbReference type="CCDS" id="CCDS52770.1">
    <molecule id="Q9Z2I4-3"/>
</dbReference>
<dbReference type="PIR" id="T14316">
    <property type="entry name" value="T14316"/>
</dbReference>
<dbReference type="RefSeq" id="NP_001158239.1">
    <molecule id="Q9Z2I4-3"/>
    <property type="nucleotide sequence ID" value="NM_001164767.1"/>
</dbReference>
<dbReference type="SMR" id="Q9Z2I4"/>
<dbReference type="FunCoup" id="Q9Z2I4">
    <property type="interactions" value="217"/>
</dbReference>
<dbReference type="STRING" id="10090.ENSMUSP00000110690"/>
<dbReference type="GlyCosmos" id="Q9Z2I4">
    <property type="glycosylation" value="12 sites, No reported glycans"/>
</dbReference>
<dbReference type="GlyGen" id="Q9Z2I4">
    <property type="glycosylation" value="13 sites, 3 N-linked glycans (3 sites)"/>
</dbReference>
<dbReference type="iPTMnet" id="Q9Z2I4"/>
<dbReference type="PhosphoSitePlus" id="Q9Z2I4"/>
<dbReference type="PaxDb" id="10090-ENSMUSP00000110690"/>
<dbReference type="ProteomicsDB" id="301635">
    <molecule id="Q9Z2I4-1"/>
</dbReference>
<dbReference type="ProteomicsDB" id="336550"/>
<dbReference type="ProteomicsDB" id="345040"/>
<dbReference type="Antibodypedia" id="2550">
    <property type="antibodies" value="194 antibodies from 33 providers"/>
</dbReference>
<dbReference type="DNASU" id="19649"/>
<dbReference type="Ensembl" id="ENSMUST00000115038.3">
    <molecule id="Q9Z2I4-3"/>
    <property type="protein sequence ID" value="ENSMUSP00000110690.2"/>
    <property type="gene ID" value="ENSMUSG00000032128.16"/>
</dbReference>
<dbReference type="Ensembl" id="ENSMUST00000170512.8">
    <molecule id="Q9Z2I4-4"/>
    <property type="protein sequence ID" value="ENSMUSP00000150639.2"/>
    <property type="gene ID" value="ENSMUSG00000032128.16"/>
</dbReference>
<dbReference type="GeneID" id="19649"/>
<dbReference type="KEGG" id="mmu:19649"/>
<dbReference type="AGR" id="MGI:1343102"/>
<dbReference type="CTD" id="64221"/>
<dbReference type="MGI" id="MGI:1343102">
    <property type="gene designation" value="Robo3"/>
</dbReference>
<dbReference type="VEuPathDB" id="HostDB:ENSMUSG00000032128"/>
<dbReference type="eggNOG" id="KOG4222">
    <property type="taxonomic scope" value="Eukaryota"/>
</dbReference>
<dbReference type="GeneTree" id="ENSGT00940000155457"/>
<dbReference type="HOGENOM" id="CLU_003227_5_1_1"/>
<dbReference type="InParanoid" id="Q9Z2I4"/>
<dbReference type="OMA" id="LMMSHTH"/>
<dbReference type="OrthoDB" id="428111at2759"/>
<dbReference type="PhylomeDB" id="Q9Z2I4"/>
<dbReference type="TreeFam" id="TF351053"/>
<dbReference type="BioGRID-ORCS" id="19649">
    <property type="hits" value="2 hits in 78 CRISPR screens"/>
</dbReference>
<dbReference type="ChiTaRS" id="Robo3">
    <property type="organism name" value="mouse"/>
</dbReference>
<dbReference type="PRO" id="PR:Q9Z2I4"/>
<dbReference type="Proteomes" id="UP000000589">
    <property type="component" value="Chromosome 9"/>
</dbReference>
<dbReference type="RNAct" id="Q9Z2I4">
    <property type="molecule type" value="protein"/>
</dbReference>
<dbReference type="Bgee" id="ENSMUSG00000032128">
    <property type="expression patterns" value="Expressed in roof plate of midbrain and 70 other cell types or tissues"/>
</dbReference>
<dbReference type="GO" id="GO:0030424">
    <property type="term" value="C:axon"/>
    <property type="evidence" value="ECO:0000314"/>
    <property type="project" value="MGI"/>
</dbReference>
<dbReference type="GO" id="GO:0005886">
    <property type="term" value="C:plasma membrane"/>
    <property type="evidence" value="ECO:0000304"/>
    <property type="project" value="Reactome"/>
</dbReference>
<dbReference type="GO" id="GO:0007411">
    <property type="term" value="P:axon guidance"/>
    <property type="evidence" value="ECO:0000314"/>
    <property type="project" value="UniProtKB"/>
</dbReference>
<dbReference type="GO" id="GO:0016199">
    <property type="term" value="P:axon midline choice point recognition"/>
    <property type="evidence" value="ECO:0000315"/>
    <property type="project" value="UniProtKB"/>
</dbReference>
<dbReference type="GO" id="GO:0006935">
    <property type="term" value="P:chemotaxis"/>
    <property type="evidence" value="ECO:0007669"/>
    <property type="project" value="UniProtKB-KW"/>
</dbReference>
<dbReference type="GO" id="GO:0071679">
    <property type="term" value="P:commissural neuron axon guidance"/>
    <property type="evidence" value="ECO:0000315"/>
    <property type="project" value="UniProtKB"/>
</dbReference>
<dbReference type="GO" id="GO:0001764">
    <property type="term" value="P:neuron migration"/>
    <property type="evidence" value="ECO:0000315"/>
    <property type="project" value="MGI"/>
</dbReference>
<dbReference type="GO" id="GO:1902669">
    <property type="term" value="P:positive regulation of axon guidance"/>
    <property type="evidence" value="ECO:0007669"/>
    <property type="project" value="Ensembl"/>
</dbReference>
<dbReference type="CDD" id="cd00063">
    <property type="entry name" value="FN3"/>
    <property type="match status" value="3"/>
</dbReference>
<dbReference type="FunFam" id="2.60.40.10:FF:000053">
    <property type="entry name" value="Roundabout guidance receptor 1"/>
    <property type="match status" value="1"/>
</dbReference>
<dbReference type="FunFam" id="2.60.40.10:FF:000888">
    <property type="entry name" value="Roundabout guidance receptor 3"/>
    <property type="match status" value="1"/>
</dbReference>
<dbReference type="FunFam" id="2.60.40.10:FF:001028">
    <property type="entry name" value="Roundabout guidance receptor 3"/>
    <property type="match status" value="1"/>
</dbReference>
<dbReference type="FunFam" id="2.60.40.10:FF:000055">
    <property type="entry name" value="roundabout homolog 1 isoform X2"/>
    <property type="match status" value="1"/>
</dbReference>
<dbReference type="FunFam" id="2.60.40.10:FF:000026">
    <property type="entry name" value="roundabout homolog 2 isoform X1"/>
    <property type="match status" value="1"/>
</dbReference>
<dbReference type="FunFam" id="2.60.40.10:FF:000008">
    <property type="entry name" value="roundabout homolog 2 isoform X2"/>
    <property type="match status" value="2"/>
</dbReference>
<dbReference type="FunFam" id="2.60.40.10:FF:000043">
    <property type="entry name" value="roundabout homolog 2 isoform X2"/>
    <property type="match status" value="1"/>
</dbReference>
<dbReference type="Gene3D" id="2.60.40.10">
    <property type="entry name" value="Immunoglobulins"/>
    <property type="match status" value="8"/>
</dbReference>
<dbReference type="InterPro" id="IPR003961">
    <property type="entry name" value="FN3_dom"/>
</dbReference>
<dbReference type="InterPro" id="IPR036116">
    <property type="entry name" value="FN3_sf"/>
</dbReference>
<dbReference type="InterPro" id="IPR007110">
    <property type="entry name" value="Ig-like_dom"/>
</dbReference>
<dbReference type="InterPro" id="IPR036179">
    <property type="entry name" value="Ig-like_dom_sf"/>
</dbReference>
<dbReference type="InterPro" id="IPR013783">
    <property type="entry name" value="Ig-like_fold"/>
</dbReference>
<dbReference type="InterPro" id="IPR013098">
    <property type="entry name" value="Ig_I-set"/>
</dbReference>
<dbReference type="InterPro" id="IPR003599">
    <property type="entry name" value="Ig_sub"/>
</dbReference>
<dbReference type="InterPro" id="IPR003598">
    <property type="entry name" value="Ig_sub2"/>
</dbReference>
<dbReference type="InterPro" id="IPR051170">
    <property type="entry name" value="Neural/epithelial_adhesion"/>
</dbReference>
<dbReference type="PANTHER" id="PTHR12231">
    <property type="entry name" value="CTX-RELATED TYPE I TRANSMEMBRANE PROTEIN"/>
    <property type="match status" value="1"/>
</dbReference>
<dbReference type="PANTHER" id="PTHR12231:SF236">
    <property type="entry name" value="ROUNDABOUT HOMOLOG 3"/>
    <property type="match status" value="1"/>
</dbReference>
<dbReference type="Pfam" id="PF00041">
    <property type="entry name" value="fn3"/>
    <property type="match status" value="2"/>
</dbReference>
<dbReference type="Pfam" id="PF07679">
    <property type="entry name" value="I-set"/>
    <property type="match status" value="3"/>
</dbReference>
<dbReference type="Pfam" id="PF13927">
    <property type="entry name" value="Ig_3"/>
    <property type="match status" value="2"/>
</dbReference>
<dbReference type="SMART" id="SM00060">
    <property type="entry name" value="FN3"/>
    <property type="match status" value="3"/>
</dbReference>
<dbReference type="SMART" id="SM00409">
    <property type="entry name" value="IG"/>
    <property type="match status" value="5"/>
</dbReference>
<dbReference type="SMART" id="SM00408">
    <property type="entry name" value="IGc2"/>
    <property type="match status" value="5"/>
</dbReference>
<dbReference type="SUPFAM" id="SSF49265">
    <property type="entry name" value="Fibronectin type III"/>
    <property type="match status" value="2"/>
</dbReference>
<dbReference type="SUPFAM" id="SSF48726">
    <property type="entry name" value="Immunoglobulin"/>
    <property type="match status" value="5"/>
</dbReference>
<dbReference type="PROSITE" id="PS50853">
    <property type="entry name" value="FN3"/>
    <property type="match status" value="3"/>
</dbReference>
<dbReference type="PROSITE" id="PS50835">
    <property type="entry name" value="IG_LIKE"/>
    <property type="match status" value="5"/>
</dbReference>
<gene>
    <name evidence="15" type="primary">Robo3</name>
    <name type="synonym">Rbig1</name>
</gene>
<reference key="1">
    <citation type="journal article" date="1999" name="Dev. Biol.">
        <title>Cloning and functional studies of a novel gene aberrantly expressed in RB-deficient embryos.</title>
        <authorList>
            <person name="Yuan S.S."/>
            <person name="Cox L.A."/>
            <person name="Dasika G.K."/>
            <person name="Lee E.Y.-H.P."/>
        </authorList>
    </citation>
    <scope>NUCLEOTIDE SEQUENCE [MRNA] (ISOFORM 3)</scope>
    <scope>ALTERNATIVE SPLICING</scope>
    <scope>TISSUE SPECIFICITY</scope>
    <scope>SUBCELLULAR LOCATION</scope>
</reference>
<reference evidence="16" key="2">
    <citation type="journal article" date="2009" name="PLoS Biol.">
        <title>Lineage-specific biology revealed by a finished genome assembly of the mouse.</title>
        <authorList>
            <person name="Church D.M."/>
            <person name="Goodstadt L."/>
            <person name="Hillier L.W."/>
            <person name="Zody M.C."/>
            <person name="Goldstein S."/>
            <person name="She X."/>
            <person name="Bult C.J."/>
            <person name="Agarwala R."/>
            <person name="Cherry J.L."/>
            <person name="DiCuccio M."/>
            <person name="Hlavina W."/>
            <person name="Kapustin Y."/>
            <person name="Meric P."/>
            <person name="Maglott D."/>
            <person name="Birtle Z."/>
            <person name="Marques A.C."/>
            <person name="Graves T."/>
            <person name="Zhou S."/>
            <person name="Teague B."/>
            <person name="Potamousis K."/>
            <person name="Churas C."/>
            <person name="Place M."/>
            <person name="Herschleb J."/>
            <person name="Runnheim R."/>
            <person name="Forrest D."/>
            <person name="Amos-Landgraf J."/>
            <person name="Schwartz D.C."/>
            <person name="Cheng Z."/>
            <person name="Lindblad-Toh K."/>
            <person name="Eichler E.E."/>
            <person name="Ponting C.P."/>
        </authorList>
    </citation>
    <scope>NUCLEOTIDE SEQUENCE [LARGE SCALE GENOMIC DNA]</scope>
    <source>
        <strain evidence="16">C57BL/6J</strain>
    </source>
</reference>
<reference key="3">
    <citation type="submission" date="2003-03" db="EMBL/GenBank/DDBJ databases">
        <authorList>
            <consortium name="The MGC Project Team"/>
        </authorList>
    </citation>
    <scope>NUCLEOTIDE SEQUENCE [LARGE SCALE MRNA] OF 1-193 (ISOFORM 1)</scope>
</reference>
<reference key="4">
    <citation type="journal article" date="2004" name="Cell">
        <title>The divergent Robo family protein rig-1/Robo3 is a negative regulator of slit responsiveness required for midline crossing by commissural axons.</title>
        <authorList>
            <person name="Sabatier C."/>
            <person name="Plump A.S."/>
            <person name="Ma L."/>
            <person name="Brose K."/>
            <person name="Tamada A."/>
            <person name="Murakami F."/>
            <person name="Lee E.Y.-H.P."/>
            <person name="Tessier-Lavigne M."/>
        </authorList>
    </citation>
    <scope>FUNCTION</scope>
    <scope>TISSUE SPECIFICITY</scope>
    <scope>DISRUPTION PHENOTYPE</scope>
</reference>
<reference key="5">
    <citation type="journal article" date="2004" name="Gene Expr. Patterns">
        <title>Rig-1 a new member of Robo family genes exhibits distinct pattern of expression during mouse development.</title>
        <authorList>
            <person name="Camurri L."/>
            <person name="Mambetisaeva E."/>
            <person name="Sundaresan V."/>
        </authorList>
    </citation>
    <scope>DEVELOPMENTAL STAGE</scope>
</reference>
<reference key="6">
    <citation type="journal article" date="2008" name="Neuron">
        <title>Alternative splicing of the Robo3 axon guidance receptor governs the midline switch from attraction to repulsion.</title>
        <authorList>
            <person name="Chen Z."/>
            <person name="Gore B.B."/>
            <person name="Long H."/>
            <person name="Ma L."/>
            <person name="Tessier-Lavigne M."/>
        </authorList>
    </citation>
    <scope>ALTERNATIVE SPLICING (ISOFORMS 1 AND 2)</scope>
    <scope>FUNCTION (ISOFORMS 1 AND 2)</scope>
    <scope>DEVELOPMENTAL STAGE (ISOFORMS 1 AND 2)</scope>
</reference>
<reference key="7">
    <citation type="journal article" date="2014" name="Neuron">
        <title>Signaling switch of the axon guidance receptor Robo3 during vertebrate evolution.</title>
        <authorList>
            <person name="Zelina P."/>
            <person name="Blockus H."/>
            <person name="Zagar Y."/>
            <person name="Peres A."/>
            <person name="Friocourt F."/>
            <person name="Wu Z."/>
            <person name="Rama N."/>
            <person name="Fouquet C."/>
            <person name="Hohenester E."/>
            <person name="Tessier-Lavigne M."/>
            <person name="Schweitzer J."/>
            <person name="Roest Crollius H."/>
            <person name="Chedotal A."/>
        </authorList>
    </citation>
    <scope>FUNCTION</scope>
</reference>
<reference key="8">
    <citation type="journal article" date="2015" name="Science">
        <title>Operational redundancy in axon guidance through the multifunctional receptor Robo3 and its ligand NELL2.</title>
        <authorList>
            <person name="Jaworski A."/>
            <person name="Tom I."/>
            <person name="Tong R.K."/>
            <person name="Gildea H.K."/>
            <person name="Koch A.W."/>
            <person name="Gonzalez L.C."/>
            <person name="Tessier-Lavigne M."/>
        </authorList>
    </citation>
    <scope>FUNCTION</scope>
    <scope>INTERACTION WITH NELL2 AND NELL1</scope>
</reference>
<reference key="9">
    <citation type="journal article" date="2019" name="Nucleic Acids Res.">
        <title>The m6A reader YTHDF1 regulates axon guidance through translational control of Robo3.1 expression.</title>
        <authorList>
            <person name="Zhuang M."/>
            <person name="Li X."/>
            <person name="Zhu J."/>
            <person name="Zhang J."/>
            <person name="Niu F."/>
            <person name="Liang F."/>
            <person name="Chen M."/>
            <person name="Li D."/>
            <person name="Han P."/>
            <person name="Ji S.J."/>
        </authorList>
    </citation>
    <scope>FUNCTION</scope>
</reference>
<reference key="10">
    <citation type="journal article" date="2020" name="Nat. Commun.">
        <title>NELL2-Robo3 complex structure reveals mechanisms of receptor activation for axon guidance.</title>
        <authorList>
            <person name="Pak J.S."/>
            <person name="DeLoughery Z.J."/>
            <person name="Wang J."/>
            <person name="Acharya N."/>
            <person name="Park Y."/>
            <person name="Jaworski A."/>
            <person name="Ozkan E."/>
        </authorList>
    </citation>
    <scope>FUNCTION (ISOFORMS 1 AND 2)</scope>
</reference>
<proteinExistence type="evidence at protein level"/>
<evidence type="ECO:0000250" key="1">
    <source>
        <dbReference type="UniProtKB" id="Q96MS0"/>
    </source>
</evidence>
<evidence type="ECO:0000255" key="2"/>
<evidence type="ECO:0000255" key="3">
    <source>
        <dbReference type="PROSITE-ProRule" id="PRU00114"/>
    </source>
</evidence>
<evidence type="ECO:0000255" key="4">
    <source>
        <dbReference type="PROSITE-ProRule" id="PRU00316"/>
    </source>
</evidence>
<evidence type="ECO:0000256" key="5">
    <source>
        <dbReference type="SAM" id="MobiDB-lite"/>
    </source>
</evidence>
<evidence type="ECO:0000269" key="6">
    <source>
    </source>
</evidence>
<evidence type="ECO:0000269" key="7">
    <source>
    </source>
</evidence>
<evidence type="ECO:0000269" key="8">
    <source>
    </source>
</evidence>
<evidence type="ECO:0000269" key="9">
    <source>
    </source>
</evidence>
<evidence type="ECO:0000269" key="10">
    <source>
    </source>
</evidence>
<evidence type="ECO:0000269" key="11">
    <source>
    </source>
</evidence>
<evidence type="ECO:0000269" key="12">
    <source>
    </source>
</evidence>
<evidence type="ECO:0000303" key="13">
    <source>
    </source>
</evidence>
<evidence type="ECO:0000305" key="14"/>
<evidence type="ECO:0000312" key="15">
    <source>
        <dbReference type="MGI" id="MGI:1343102"/>
    </source>
</evidence>
<evidence type="ECO:0000312" key="16">
    <source>
        <dbReference type="Proteomes" id="UP000000589"/>
    </source>
</evidence>
<accession>Q9Z2I4</accession>
<accession>A0A1L1SU85</accession>
<accession>D3Z4M6</accession>
<sequence>MLRYLLKTLLQMNLFADSLARDISNSSELLFGFNSSLAALNPSLLPPGDPSLNGSRVGPEDAMPRIVEQPPDLVVSRGEPATLPCRAEGRPRPNIEWYKNGARVATAREDPRAHRLLLPSGALFFPRIVHGRRSRPDEGVYTCVARNYLGAAASRNASLEVAVLRDDFRQSPGNVVVAVGEPAVMECVPPKGHPEPLVTWKKGKIKLKEEEGRITIRGGKLMMSHTFKSDAGMYMCVASNMAGERESGAAELVVLERPSFLRRPINQVVLADAPVNFLCEVQGDPQPNLHWRKDDGELPAGRYEIRSDHSLWIDQVSSEDEGTYTCVAENSVGRAEASGSLSVHVPPQFVTKPQNQTVAPGANVSFQCETKGNPPPAIFWQKEGSQVLLFPSQSLQPMGRLLVSPRGQLNITEVKIGDGGYYVCQAVSVAGSILAKALLEIKGASIDGLPPIILQGPANQTLVLGSSVWLPCRVIGNPQPNIQWKKDERWLQGDDSQFNLMDNGTLHIASIQEMDMGFYSCVAKSSIGEATWNSWLRKQEDWGASPGPATGPSNPPGPPSQPIVTEVTANSITLTWKPNPQSGATATSYVIEAFSQAAGNTWRTVADGVQLETYTISGLQPNTIYLFLVRAVGAWGLSEPSPVSEPVQTQDSSLSRPAEDPWKGQRGLAEVAVRMQEPTVLGPRTLQVSWTVDGPVQLVQGFRVSWRIAGLDQGSWTMLDLQSPHKQSTVLRGLPPGAQIQIKVQVQGQEGLGAESPFVTRSIPEEAPSGPPQGVAVALGGDRNSSVTVSWEPPLPSQRNGVITEYQIWCLGNESRFHLNRSAAGWARSVTFSGLLPGQIYRALVAAATSAGVGVASAPVLVQLPFPPAAEPGPEVSEGLAERLAKVLRKPAFLAGSSAACGALLLGFCAALYRRQKQRKELSHYTASFAYTPAVSFPHSEGLSGSSSRPPMGLGPAAYPWLADSWPHPPRSPSAQEPRGSCCPSNPDPDDRYYNEAGISLYLAQTARGANASGEGPVYSTIDPVGEELQTFHGGFPQHSSGDPSTWSQYAPPEWSEGDSGARGGQGKLLGKPVQMPSLSWPEALPPPPPSCELSCPEGPEEELKGSSDLEEWCPPVPEKSHLVGSSSSGACMVAPAPRDTPSPTSSYGQQSTATLTPSPPDPPQPPTDIPHLHQMPRRVPLGPSSPLSVSQPALSSHDGRPVGLGAGPVLSYHASPSPVPSTASSAPGRTRQVTGEMTPPLHGHRARIRKKPKALPYRREHSPGDLPPPPLPPPEEETSWPLGLRAAGSMSSLERERSGERRVVQAVPLGAQPLGAQRGPHPDAALLGCAAEEAWLPYGRPSFLSHGQGTSTCSTAGSNSSRGSNSSRGSRGSRGPGRSRSRSRSQSQSQRPGRNRREEPR</sequence>
<feature type="signal peptide" evidence="2">
    <location>
        <begin position="1"/>
        <end position="20"/>
    </location>
</feature>
<feature type="chain" id="PRO_0000031039" description="Roundabout homolog 3">
    <location>
        <begin position="21"/>
        <end position="1402"/>
    </location>
</feature>
<feature type="topological domain" description="Extracellular" evidence="2">
    <location>
        <begin position="21"/>
        <end position="891"/>
    </location>
</feature>
<feature type="transmembrane region" description="Helical" evidence="2">
    <location>
        <begin position="892"/>
        <end position="912"/>
    </location>
</feature>
<feature type="topological domain" description="Cytoplasmic" evidence="2">
    <location>
        <begin position="913"/>
        <end position="1402"/>
    </location>
</feature>
<feature type="domain" description="Ig-like C2-type 1" evidence="3">
    <location>
        <begin position="64"/>
        <end position="160"/>
    </location>
</feature>
<feature type="domain" description="Ig-like C2-type 2" evidence="3">
    <location>
        <begin position="166"/>
        <end position="253"/>
    </location>
</feature>
<feature type="domain" description="Ig-like C2-type 3" evidence="3">
    <location>
        <begin position="258"/>
        <end position="342"/>
    </location>
</feature>
<feature type="domain" description="Ig-like C2-type 4" evidence="3">
    <location>
        <begin position="347"/>
        <end position="440"/>
    </location>
</feature>
<feature type="domain" description="Ig-like C2-type 5" evidence="3">
    <location>
        <begin position="450"/>
        <end position="531"/>
    </location>
</feature>
<feature type="domain" description="Fibronectin type-III 1" evidence="4">
    <location>
        <begin position="558"/>
        <end position="652"/>
    </location>
</feature>
<feature type="domain" description="Fibronectin type-III 2" evidence="4">
    <location>
        <begin position="672"/>
        <end position="766"/>
    </location>
</feature>
<feature type="domain" description="Fibronectin type-III 3" evidence="4">
    <location>
        <begin position="771"/>
        <end position="869"/>
    </location>
</feature>
<feature type="region of interest" description="Disordered" evidence="5">
    <location>
        <begin position="540"/>
        <end position="561"/>
    </location>
</feature>
<feature type="region of interest" description="Disordered" evidence="5">
    <location>
        <begin position="639"/>
        <end position="662"/>
    </location>
</feature>
<feature type="region of interest" description="Disordered" evidence="5">
    <location>
        <begin position="965"/>
        <end position="989"/>
    </location>
</feature>
<feature type="region of interest" description="Disordered" evidence="5">
    <location>
        <begin position="1032"/>
        <end position="1307"/>
    </location>
</feature>
<feature type="region of interest" description="Disordered" evidence="5">
    <location>
        <begin position="1340"/>
        <end position="1402"/>
    </location>
</feature>
<feature type="compositionally biased region" description="Low complexity" evidence="5">
    <location>
        <begin position="543"/>
        <end position="552"/>
    </location>
</feature>
<feature type="compositionally biased region" description="Polar residues" evidence="5">
    <location>
        <begin position="646"/>
        <end position="655"/>
    </location>
</feature>
<feature type="compositionally biased region" description="Polar residues" evidence="5">
    <location>
        <begin position="1038"/>
        <end position="1049"/>
    </location>
</feature>
<feature type="compositionally biased region" description="Polar residues" evidence="5">
    <location>
        <begin position="1142"/>
        <end position="1152"/>
    </location>
</feature>
<feature type="compositionally biased region" description="Pro residues" evidence="5">
    <location>
        <begin position="1158"/>
        <end position="1169"/>
    </location>
</feature>
<feature type="compositionally biased region" description="Low complexity" evidence="5">
    <location>
        <begin position="1178"/>
        <end position="1191"/>
    </location>
</feature>
<feature type="compositionally biased region" description="Low complexity" evidence="5">
    <location>
        <begin position="1215"/>
        <end position="1228"/>
    </location>
</feature>
<feature type="compositionally biased region" description="Basic residues" evidence="5">
    <location>
        <begin position="1243"/>
        <end position="1254"/>
    </location>
</feature>
<feature type="compositionally biased region" description="Basic and acidic residues" evidence="5">
    <location>
        <begin position="1294"/>
        <end position="1304"/>
    </location>
</feature>
<feature type="compositionally biased region" description="Polar residues" evidence="5">
    <location>
        <begin position="1346"/>
        <end position="1357"/>
    </location>
</feature>
<feature type="compositionally biased region" description="Low complexity" evidence="5">
    <location>
        <begin position="1358"/>
        <end position="1371"/>
    </location>
</feature>
<feature type="modified residue" description="Phosphoserine" evidence="1">
    <location>
        <position position="1263"/>
    </location>
</feature>
<feature type="glycosylation site" description="N-linked (GlcNAc...) asparagine" evidence="2">
    <location>
        <position position="25"/>
    </location>
</feature>
<feature type="glycosylation site" description="N-linked (GlcNAc...) asparagine" evidence="2">
    <location>
        <position position="34"/>
    </location>
</feature>
<feature type="glycosylation site" description="N-linked (GlcNAc...) asparagine" evidence="2">
    <location>
        <position position="53"/>
    </location>
</feature>
<feature type="glycosylation site" description="N-linked (GlcNAc...) asparagine" evidence="2">
    <location>
        <position position="156"/>
    </location>
</feature>
<feature type="glycosylation site" description="N-linked (GlcNAc...) asparagine" evidence="2">
    <location>
        <position position="355"/>
    </location>
</feature>
<feature type="glycosylation site" description="N-linked (GlcNAc...) asparagine" evidence="2">
    <location>
        <position position="363"/>
    </location>
</feature>
<feature type="glycosylation site" description="N-linked (GlcNAc...) asparagine" evidence="2">
    <location>
        <position position="410"/>
    </location>
</feature>
<feature type="glycosylation site" description="N-linked (GlcNAc...) asparagine" evidence="2">
    <location>
        <position position="459"/>
    </location>
</feature>
<feature type="glycosylation site" description="N-linked (GlcNAc...) asparagine" evidence="2">
    <location>
        <position position="503"/>
    </location>
</feature>
<feature type="glycosylation site" description="N-linked (GlcNAc...) asparagine" evidence="2">
    <location>
        <position position="784"/>
    </location>
</feature>
<feature type="glycosylation site" description="N-linked (GlcNAc...) asparagine" evidence="2">
    <location>
        <position position="813"/>
    </location>
</feature>
<feature type="glycosylation site" description="N-linked (GlcNAc...) asparagine" evidence="2">
    <location>
        <position position="820"/>
    </location>
</feature>
<feature type="disulfide bond" evidence="3">
    <location>
        <begin position="85"/>
        <end position="143"/>
    </location>
</feature>
<feature type="disulfide bond" evidence="3">
    <location>
        <begin position="187"/>
        <end position="236"/>
    </location>
</feature>
<feature type="disulfide bond" evidence="3">
    <location>
        <begin position="279"/>
        <end position="326"/>
    </location>
</feature>
<feature type="disulfide bond" evidence="3">
    <location>
        <begin position="368"/>
        <end position="424"/>
    </location>
</feature>
<feature type="disulfide bond" evidence="3">
    <location>
        <begin position="472"/>
        <end position="521"/>
    </location>
</feature>
<feature type="splice variant" id="VSP_062061" description="In isoform 3.">
    <original>MLRYLLKTLLQMNLFADSLARDISNSSELLFGFNSSLAALNPSLLPPGDPSLN</original>
    <variation>MSEAEGSLTLQSKPGLPPVALPGYLELPSSP</variation>
    <location>
        <begin position="1"/>
        <end position="53"/>
    </location>
</feature>
<feature type="splice variant" id="VSP_062062" description="In isoform 2." evidence="14">
    <original>EETSWPLGLRAAGSMSSLERERSGERRVVQAVPLGAQPLGA</original>
    <variation>LRDKLALGSAGSRQHVFPRARAQWGEESGAGSASRGPTSS</variation>
    <location>
        <begin position="1277"/>
        <end position="1317"/>
    </location>
</feature>
<feature type="splice variant" id="VSP_062063" description="In isoform 2." evidence="14">
    <original>AALLGCAAEEAWLPYGRPSFLSHGQGTSTCSTAGSNSSRGSNS</original>
    <variation>GKESQGRGRGLEACRSPNSPQLPLDSCIWSTLKLSLVSFIPSK</variation>
    <location>
        <begin position="1325"/>
        <end position="1367"/>
    </location>
</feature>
<feature type="splice variant" id="VSP_062064" description="In isoform 3.">
    <original>AALLGCAAEEAWLPYGRPSFLSHGQGTSTCSTAGSNSSRGSNS</original>
    <variation>GKESQGRGRGLEACRSPNSPQLPVDSCIWSTLKLSLVSFIPSK</variation>
    <location>
        <begin position="1325"/>
        <end position="1367"/>
    </location>
</feature>
<feature type="splice variant" id="VSP_062065" description="In isoform 2 and isoform 3." evidence="14">
    <location>
        <begin position="1368"/>
        <end position="1402"/>
    </location>
</feature>
<protein>
    <recommendedName>
        <fullName>Roundabout homolog 3</fullName>
    </recommendedName>
    <alternativeName>
        <fullName>Retinoblastoma-inhibiting gene 1 protein</fullName>
        <shortName>Rig-1</shortName>
    </alternativeName>
    <alternativeName>
        <fullName evidence="15">Roundabout guidance receptor 3</fullName>
    </alternativeName>
</protein>
<comment type="function">
    <text evidence="8 9 10 11 12">Receptor involved in axon guidance during development. Acts as a multifunctional regulator of pathfinding that simultaneously mediates NELL2 repulsion, inhibits SLIT repulsion, and facilitates Netrin-1/NTN1 attraction (PubMed:15084255, PubMed:18466743, PubMed:25433640, PubMed:30843071). In spinal cord development plays a role in guiding commissural axons probably by preventing premature sensitivity to Slit proteins thus inhibiting Slit signaling through ROBO1/ROBO2 (PubMed:15084255, PubMed:18466743). Binding OF NELL2 to the receptor ROBO3 promotes oligomerization of ROBO3, resulting in the repulsion of commissural axons in the midline (PubMed:30843071, PubMed:32198364). ROBO3 also indirectly boosts axon attraction to NTN1 without interacting with NTN1 itself (PubMed:25433640).</text>
</comment>
<comment type="function">
    <molecule>Isoform 1</molecule>
    <text evidence="9 12">Mediates NELL2 premature repulsion of commissural axons during midline crossing.</text>
</comment>
<comment type="function">
    <molecule>Isoform 2</molecule>
    <text evidence="9 12">After midline crossing by the commissural axons, may, in concert with ROBO1 and ROBO2, prevent midline recrossing. Does not mediate NELL2 signaling.</text>
</comment>
<comment type="subunit">
    <text evidence="1">Interacts (via Fibronectin type-III 1 domain) with NELL2 (via the EGF domains) with a 3:3 stoichiometry; this interaction promotes oligomerization of ROBO3 resulting in the repulsion of commissural axons in the midline.</text>
</comment>
<comment type="subcellular location">
    <subcellularLocation>
        <location evidence="6">Membrane</location>
        <topology evidence="2">Single-pass type I membrane protein</topology>
    </subcellularLocation>
</comment>
<comment type="alternative products">
    <event type="alternative splicing"/>
    <isoform>
        <id>Q9Z2I4-3</id>
        <name>1</name>
        <name evidence="13">3.1</name>
        <sequence type="displayed"/>
    </isoform>
    <isoform>
        <id>Q9Z2I4-1</id>
        <name>2</name>
        <name evidence="13">3.2</name>
        <sequence type="described" ref="VSP_062062 VSP_062063 VSP_062065"/>
    </isoform>
    <isoform>
        <id>Q9Z2I4-4</id>
        <name evidence="14">3</name>
        <sequence type="described" ref="VSP_062061 VSP_062064 VSP_062065"/>
    </isoform>
    <text>A number of isoforms are produced.</text>
</comment>
<comment type="tissue specificity">
    <text evidence="6 8">Detected in embryonal spinal cord and hindbrain.</text>
</comment>
<comment type="developmental stage">
    <text evidence="7 9">At 11.5 days post-conception (dpc) highly expressed in spinal cord commissural axons before crossing the floor plate (at protein level) (PubMed:14678835, PubMed:18466743). At 11.5 and 12.5 dpc, expressed in the midline and in the postcrossing ventral fiber tracts (at protein level) (PubMed:18466743). At 10.5 dpc is expressed in long stripes in the dorso-ventral part of the neural tube (PubMed:14678835). Later at 11.5, 12.5 and 13.5 dpc expression gradually moves dorsally and medially towards the roof plate (PubMed:14678835). After midline crossing initially continues to be expressed but then gets down-regulated (PubMed:14678835).</text>
</comment>
<comment type="developmental stage">
    <molecule>Isoform 1</molecule>
    <text evidence="9">At 11.5 and 12.5 dpc, highly expressed on commissural axons before and during midline crossing (at protein level).</text>
</comment>
<comment type="developmental stage">
    <molecule>Isoform 2</molecule>
    <text evidence="9">At 11.5 dpc expressed at a low level on the portion of commissural axons distal to the midline and a higher level in the same region at 12.5 dpc (at protein level).</text>
</comment>
<comment type="disruption phenotype">
    <text evidence="8">Deficient mice lack embryonal spinal cord commissural axons crossing the floor plate.</text>
</comment>
<comment type="similarity">
    <text evidence="14">Belongs to the immunoglobulin superfamily. ROBO family.</text>
</comment>
<comment type="sequence caution" evidence="14">
    <conflict type="frameshift">
        <sequence resource="EMBL-CDS" id="AAD11628"/>
    </conflict>
</comment>
<name>ROBO3_MOUSE</name>
<keyword id="KW-0025">Alternative splicing</keyword>
<keyword id="KW-0145">Chemotaxis</keyword>
<keyword id="KW-0217">Developmental protein</keyword>
<keyword id="KW-0221">Differentiation</keyword>
<keyword id="KW-1015">Disulfide bond</keyword>
<keyword id="KW-0325">Glycoprotein</keyword>
<keyword id="KW-0393">Immunoglobulin domain</keyword>
<keyword id="KW-0472">Membrane</keyword>
<keyword id="KW-0524">Neurogenesis</keyword>
<keyword id="KW-0597">Phosphoprotein</keyword>
<keyword id="KW-0675">Receptor</keyword>
<keyword id="KW-1185">Reference proteome</keyword>
<keyword id="KW-0677">Repeat</keyword>
<keyword id="KW-0732">Signal</keyword>
<keyword id="KW-0812">Transmembrane</keyword>
<keyword id="KW-1133">Transmembrane helix</keyword>
<organism>
    <name type="scientific">Mus musculus</name>
    <name type="common">Mouse</name>
    <dbReference type="NCBI Taxonomy" id="10090"/>
    <lineage>
        <taxon>Eukaryota</taxon>
        <taxon>Metazoa</taxon>
        <taxon>Chordata</taxon>
        <taxon>Craniata</taxon>
        <taxon>Vertebrata</taxon>
        <taxon>Euteleostomi</taxon>
        <taxon>Mammalia</taxon>
        <taxon>Eutheria</taxon>
        <taxon>Euarchontoglires</taxon>
        <taxon>Glires</taxon>
        <taxon>Rodentia</taxon>
        <taxon>Myomorpha</taxon>
        <taxon>Muroidea</taxon>
        <taxon>Muridae</taxon>
        <taxon>Murinae</taxon>
        <taxon>Mus</taxon>
        <taxon>Mus</taxon>
    </lineage>
</organism>